<proteinExistence type="evidence at protein level"/>
<organism>
    <name type="scientific">Homo sapiens</name>
    <name type="common">Human</name>
    <dbReference type="NCBI Taxonomy" id="9606"/>
    <lineage>
        <taxon>Eukaryota</taxon>
        <taxon>Metazoa</taxon>
        <taxon>Chordata</taxon>
        <taxon>Craniata</taxon>
        <taxon>Vertebrata</taxon>
        <taxon>Euteleostomi</taxon>
        <taxon>Mammalia</taxon>
        <taxon>Eutheria</taxon>
        <taxon>Euarchontoglires</taxon>
        <taxon>Primates</taxon>
        <taxon>Haplorrhini</taxon>
        <taxon>Catarrhini</taxon>
        <taxon>Hominidae</taxon>
        <taxon>Homo</taxon>
    </lineage>
</organism>
<reference key="1">
    <citation type="journal article" date="2000" name="J. Mol. Med.">
        <title>Molecular cloning and expression of a novel klotho-related protein.</title>
        <authorList>
            <person name="Yahata K."/>
            <person name="Mori K."/>
            <person name="Arai H."/>
            <person name="Koide S."/>
            <person name="Ogawa Y."/>
            <person name="Mukoyama M."/>
            <person name="Sugawara A."/>
            <person name="Ozaki S."/>
            <person name="Tanaka I."/>
            <person name="Nabeshima Y."/>
            <person name="Nakao K."/>
        </authorList>
    </citation>
    <scope>NUCLEOTIDE SEQUENCE [MRNA] (ISOFORM 1)</scope>
    <scope>TISSUE SPECIFICITY</scope>
    <source>
        <tissue>Fetal liver</tissue>
    </source>
</reference>
<reference key="2">
    <citation type="journal article" date="2001" name="Biochem. J.">
        <title>Cloning and characterization of human liver cytosolic beta-glycosidase.</title>
        <authorList>
            <person name="de Graaf M."/>
            <person name="van Veen I.C."/>
            <person name="van der Meulen-Muileman I.H."/>
            <person name="Gerritsen W.R."/>
            <person name="Pinedo H.M."/>
            <person name="Haisma H.J."/>
        </authorList>
    </citation>
    <scope>NUCLEOTIDE SEQUENCE [MRNA] (ISOFORM 1)</scope>
    <scope>FUNCTION</scope>
    <scope>CATALYTIC ACTIVITY</scope>
    <scope>ACTIVITY REGULATION</scope>
    <scope>BIOPHYSICOCHEMICAL PROPERTIES</scope>
    <source>
        <tissue>Liver</tissue>
    </source>
</reference>
<reference key="3">
    <citation type="journal article" date="2002" name="Eur. J. Biochem.">
        <title>Functional expression of human liver cytosolic beta-glucosidase in Pichia pastoris. Insights into its role in the metabolism of dietary glucosides.</title>
        <authorList>
            <person name="Berrin J.-G."/>
            <person name="McLauchlan W.R."/>
            <person name="Needs P."/>
            <person name="Williamson G."/>
            <person name="Puigserver A."/>
            <person name="Kroon P.A."/>
            <person name="Juge N."/>
        </authorList>
    </citation>
    <scope>NUCLEOTIDE SEQUENCE [MRNA] (ISOFORM 1)</scope>
    <scope>FUNCTION</scope>
    <scope>CATALYTIC ACTIVITY</scope>
    <scope>BLOCKAGE OF N-TERMINUS</scope>
    <scope>ACTIVITY REGULATION</scope>
    <scope>BIOPHYSICOCHEMICAL PROPERTIES</scope>
    <source>
        <tissue>Liver</tissue>
    </source>
</reference>
<reference key="4">
    <citation type="submission" date="2000-11" db="EMBL/GenBank/DDBJ databases">
        <authorList>
            <person name="Hays W.S."/>
            <person name="VanderJagt D.J."/>
            <person name="Glew R.H."/>
            <person name="Johnston D.E."/>
        </authorList>
    </citation>
    <scope>NUCLEOTIDE SEQUENCE [MRNA] (ISOFORM 1)</scope>
    <source>
        <tissue>Liver</tissue>
    </source>
</reference>
<reference key="5">
    <citation type="submission" date="2005-04" db="EMBL/GenBank/DDBJ databases">
        <authorList>
            <person name="Suzuki Y."/>
            <person name="Sugano S."/>
            <person name="Totoki Y."/>
            <person name="Toyoda A."/>
            <person name="Takeda T."/>
            <person name="Sakaki Y."/>
            <person name="Tanaka A."/>
            <person name="Yokoyama S."/>
        </authorList>
    </citation>
    <scope>NUCLEOTIDE SEQUENCE [LARGE SCALE MRNA] (ISOFORM 1)</scope>
    <source>
        <tissue>Small intestine</tissue>
    </source>
</reference>
<reference key="6">
    <citation type="journal article" date="2005" name="Nature">
        <title>Generation and annotation of the DNA sequences of human chromosomes 2 and 4.</title>
        <authorList>
            <person name="Hillier L.W."/>
            <person name="Graves T.A."/>
            <person name="Fulton R.S."/>
            <person name="Fulton L.A."/>
            <person name="Pepin K.H."/>
            <person name="Minx P."/>
            <person name="Wagner-McPherson C."/>
            <person name="Layman D."/>
            <person name="Wylie K."/>
            <person name="Sekhon M."/>
            <person name="Becker M.C."/>
            <person name="Fewell G.A."/>
            <person name="Delehaunty K.D."/>
            <person name="Miner T.L."/>
            <person name="Nash W.E."/>
            <person name="Kremitzki C."/>
            <person name="Oddy L."/>
            <person name="Du H."/>
            <person name="Sun H."/>
            <person name="Bradshaw-Cordum H."/>
            <person name="Ali J."/>
            <person name="Carter J."/>
            <person name="Cordes M."/>
            <person name="Harris A."/>
            <person name="Isak A."/>
            <person name="van Brunt A."/>
            <person name="Nguyen C."/>
            <person name="Du F."/>
            <person name="Courtney L."/>
            <person name="Kalicki J."/>
            <person name="Ozersky P."/>
            <person name="Abbott S."/>
            <person name="Armstrong J."/>
            <person name="Belter E.A."/>
            <person name="Caruso L."/>
            <person name="Cedroni M."/>
            <person name="Cotton M."/>
            <person name="Davidson T."/>
            <person name="Desai A."/>
            <person name="Elliott G."/>
            <person name="Erb T."/>
            <person name="Fronick C."/>
            <person name="Gaige T."/>
            <person name="Haakenson W."/>
            <person name="Haglund K."/>
            <person name="Holmes A."/>
            <person name="Harkins R."/>
            <person name="Kim K."/>
            <person name="Kruchowski S.S."/>
            <person name="Strong C.M."/>
            <person name="Grewal N."/>
            <person name="Goyea E."/>
            <person name="Hou S."/>
            <person name="Levy A."/>
            <person name="Martinka S."/>
            <person name="Mead K."/>
            <person name="McLellan M.D."/>
            <person name="Meyer R."/>
            <person name="Randall-Maher J."/>
            <person name="Tomlinson C."/>
            <person name="Dauphin-Kohlberg S."/>
            <person name="Kozlowicz-Reilly A."/>
            <person name="Shah N."/>
            <person name="Swearengen-Shahid S."/>
            <person name="Snider J."/>
            <person name="Strong J.T."/>
            <person name="Thompson J."/>
            <person name="Yoakum M."/>
            <person name="Leonard S."/>
            <person name="Pearman C."/>
            <person name="Trani L."/>
            <person name="Radionenko M."/>
            <person name="Waligorski J.E."/>
            <person name="Wang C."/>
            <person name="Rock S.M."/>
            <person name="Tin-Wollam A.-M."/>
            <person name="Maupin R."/>
            <person name="Latreille P."/>
            <person name="Wendl M.C."/>
            <person name="Yang S.-P."/>
            <person name="Pohl C."/>
            <person name="Wallis J.W."/>
            <person name="Spieth J."/>
            <person name="Bieri T.A."/>
            <person name="Berkowicz N."/>
            <person name="Nelson J.O."/>
            <person name="Osborne J."/>
            <person name="Ding L."/>
            <person name="Meyer R."/>
            <person name="Sabo A."/>
            <person name="Shotland Y."/>
            <person name="Sinha P."/>
            <person name="Wohldmann P.E."/>
            <person name="Cook L.L."/>
            <person name="Hickenbotham M.T."/>
            <person name="Eldred J."/>
            <person name="Williams D."/>
            <person name="Jones T.A."/>
            <person name="She X."/>
            <person name="Ciccarelli F.D."/>
            <person name="Izaurralde E."/>
            <person name="Taylor J."/>
            <person name="Schmutz J."/>
            <person name="Myers R.M."/>
            <person name="Cox D.R."/>
            <person name="Huang X."/>
            <person name="McPherson J.D."/>
            <person name="Mardis E.R."/>
            <person name="Clifton S.W."/>
            <person name="Warren W.C."/>
            <person name="Chinwalla A.T."/>
            <person name="Eddy S.R."/>
            <person name="Marra M.A."/>
            <person name="Ovcharenko I."/>
            <person name="Furey T.S."/>
            <person name="Miller W."/>
            <person name="Eichler E.E."/>
            <person name="Bork P."/>
            <person name="Suyama M."/>
            <person name="Torrents D."/>
            <person name="Waterston R.H."/>
            <person name="Wilson R.K."/>
        </authorList>
    </citation>
    <scope>NUCLEOTIDE SEQUENCE [LARGE SCALE GENOMIC DNA]</scope>
    <scope>VARIANT 456-TYR--LEU-469 DEL</scope>
</reference>
<reference key="7">
    <citation type="journal article" date="2004" name="Genome Res.">
        <title>The status, quality, and expansion of the NIH full-length cDNA project: the Mammalian Gene Collection (MGC).</title>
        <authorList>
            <consortium name="The MGC Project Team"/>
        </authorList>
    </citation>
    <scope>NUCLEOTIDE SEQUENCE [LARGE SCALE MRNA] (ISOFORMS 1 AND 2)</scope>
    <source>
        <tissue>Kidney</tissue>
        <tissue>Liver</tissue>
    </source>
</reference>
<reference key="8">
    <citation type="journal article" date="2003" name="Biochem. J.">
        <title>Substrate (aglycone) specificity of human cytosolic beta-glucosidase.</title>
        <authorList>
            <person name="Berrin J.-G."/>
            <person name="Czjzek M."/>
            <person name="Kroon P.A."/>
            <person name="McLauchlan W.R."/>
            <person name="Puigserver A."/>
            <person name="Williamson G."/>
            <person name="Juge N."/>
        </authorList>
    </citation>
    <scope>MUTAGENESIS OF VAL-168; PHE-225 AND TYR-308</scope>
</reference>
<reference key="9">
    <citation type="journal article" date="2003" name="Eur. J. Nutr.">
        <title>Deglycosylation by small intestinal epithelial cell beta-glucosidases is a critical step in the absorption and metabolism of dietary flavonoid glycosides in humans.</title>
        <authorList>
            <person name="Nemeth K."/>
            <person name="Plumb G.W."/>
            <person name="Berrin J.-G."/>
            <person name="Juge N."/>
            <person name="Jacob R."/>
            <person name="Naim H.Y."/>
            <person name="Williamson G."/>
            <person name="Swallow D.M."/>
            <person name="Kroon P.A."/>
        </authorList>
    </citation>
    <scope>FUNCTION</scope>
    <scope>SUBCELLULAR LOCATION</scope>
    <scope>TISSUE SPECIFICITY</scope>
</reference>
<reference key="10">
    <citation type="journal article" date="2011" name="Blood Cells Mol. Dis.">
        <title>The cytosolic beta-glucosidase GBA3 does not influence type 1 Gaucher disease manifestation.</title>
        <authorList>
            <person name="Dekker N."/>
            <person name="Voorn-Brouwer T."/>
            <person name="Verhoek M."/>
            <person name="Wennekes T."/>
            <person name="Narayan R.S."/>
            <person name="Speijer D."/>
            <person name="Hollak C.E."/>
            <person name="Overkleeft H.S."/>
            <person name="Boot R.G."/>
            <person name="Aerts J.M."/>
        </authorList>
    </citation>
    <scope>FUNCTION</scope>
    <scope>CATALYTIC ACTIVITY</scope>
    <scope>BIOPHYSICOCHEMICAL PROPERTIES</scope>
    <scope>ACTIVITY REGULATION</scope>
    <scope>POLYMORPHISM</scope>
    <scope>VARIANT 456-TYR--LEU-469 DEL</scope>
</reference>
<reference key="11">
    <citation type="journal article" date="2015" name="Biomolecules">
        <title>Co-Expression of NEU2 and GBA3 Causes a Drastic Reduction in Cytosolic Sialyl Free N-glycans in Human MKN45 Stomach Cancer Cells-Evidence for the Physical Interaction of NEU2 and GBA3.</title>
        <authorList>
            <person name="Wang L."/>
            <person name="Seino J."/>
            <person name="Tomotake H."/>
            <person name="Funakoshi Y."/>
            <person name="Hirayama H."/>
            <person name="Suzuki T."/>
        </authorList>
    </citation>
    <scope>FUNCTION</scope>
    <scope>INTERACTION WITH NEU2</scope>
</reference>
<reference key="12">
    <citation type="journal article" date="2016" name="J. Lipid Res.">
        <title>Glucosylated cholesterol in mammalian cells and tissues: formation and degradation by multiple cellular beta-glucosidases.</title>
        <authorList>
            <person name="Marques A.R."/>
            <person name="Mirzaian M."/>
            <person name="Akiyama H."/>
            <person name="Wisse P."/>
            <person name="Ferraz M.J."/>
            <person name="Gaspar P."/>
            <person name="Ghauharali-van der Vlugt K."/>
            <person name="Meijer R."/>
            <person name="Giraldo P."/>
            <person name="Alfonso P."/>
            <person name="Irun P."/>
            <person name="Dahl M."/>
            <person name="Karlsson S."/>
            <person name="Pavlova E.V."/>
            <person name="Cox T.M."/>
            <person name="Scheij S."/>
            <person name="Verhoek M."/>
            <person name="Ottenhoff R."/>
            <person name="van Roomen C.P."/>
            <person name="Pannu N.S."/>
            <person name="van Eijk M."/>
            <person name="Dekker N."/>
            <person name="Boot R.G."/>
            <person name="Overkleeft H.S."/>
            <person name="Blommaart E."/>
            <person name="Hirabayashi Y."/>
            <person name="Aerts J.M."/>
        </authorList>
    </citation>
    <scope>FUNCTION</scope>
    <scope>CATALYTIC ACTIVITY</scope>
</reference>
<reference key="13">
    <citation type="journal article" date="2021" name="J. Lipid Res.">
        <title>Human glucocerebrosidase mediates formation of xylosyl-cholesterol by beta-xylosidase and transxylosidase reactions.</title>
        <authorList>
            <person name="Boer D.E."/>
            <person name="Mirzaian M."/>
            <person name="Ferraz M.J."/>
            <person name="Zwiers K.C."/>
            <person name="Baks M.V."/>
            <person name="Hazeu M.D."/>
            <person name="Ottenhoff R."/>
            <person name="Marques A.R.A."/>
            <person name="Meijer R."/>
            <person name="Roos J.C.P."/>
            <person name="Cox T.M."/>
            <person name="Boot R.G."/>
            <person name="Pannu N."/>
            <person name="Overkleeft H.S."/>
            <person name="Artola M."/>
            <person name="Aerts J.M."/>
        </authorList>
    </citation>
    <scope>FUNCTION</scope>
    <scope>CATALYTIC ACTIVITY</scope>
</reference>
<reference key="14">
    <citation type="journal article" date="2007" name="J. Biol. Chem.">
        <title>Klotho-related protein is a novel cytosolic neutral beta-glycosylceramidase.</title>
        <authorList>
            <person name="Hayashi Y."/>
            <person name="Okino N."/>
            <person name="Kakuta Y."/>
            <person name="Shikanai T."/>
            <person name="Tani M."/>
            <person name="Narimatsu H."/>
            <person name="Ito M."/>
        </authorList>
    </citation>
    <scope>X-RAY CRYSTALLOGRAPHY (1.6 ANGSTROMS) IN COMPLEX WITH GLUCOSE AND GALACTOSE</scope>
    <scope>FUNCTION</scope>
    <scope>CATALYTIC ACTIVITY</scope>
    <scope>ACTIVITY REGULATION</scope>
    <scope>BIOPHYSICOCHEMICAL PROPERTIES</scope>
    <scope>SUBCELLULAR LOCATION</scope>
    <scope>MUTAGENESIS OF GLU-165 AND GLU-373</scope>
</reference>
<reference key="15">
    <citation type="journal article" date="2007" name="J. Mol. Biol.">
        <title>The crystal structure of human cytosolic beta-glucosidase unravels the substrate aglycone specificity of a family 1 glycoside hydrolase.</title>
        <authorList>
            <person name="Tribolo S."/>
            <person name="Berrin J.G."/>
            <person name="Kroon P.A."/>
            <person name="Czjzek M."/>
            <person name="Juge N."/>
        </authorList>
    </citation>
    <scope>X-RAY CRYSTALLOGRAPHY (2.7 ANGSTROMS)</scope>
</reference>
<reference key="16">
    <citation type="journal article" date="2008" name="Biochem. Biophys. Res. Commun.">
        <title>Crystal structure of the covalent intermediate of human cytosolic beta-glucosidase.</title>
        <authorList>
            <person name="Noguchi J."/>
            <person name="Hayashi Y."/>
            <person name="Baba Y."/>
            <person name="Okino N."/>
            <person name="Kimura M."/>
            <person name="Ito M."/>
            <person name="Kakuta Y."/>
        </authorList>
    </citation>
    <scope>X-RAY CRYSTALLOGRAPHY (1.9 ANGSTROMS) IN COMPLEX WITH GLUCOSE</scope>
    <scope>MUTAGENESIS OF GLU-165</scope>
</reference>
<reference key="17">
    <citation type="journal article" date="2004" name="J. Lab. Clin. Med.">
        <title>Mutations in the gene encoding cytosolic beta-glucosidase in Gaucher disease.</title>
        <authorList>
            <person name="Beutler E."/>
            <person name="Beutler L."/>
            <person name="West C."/>
        </authorList>
    </citation>
    <scope>VARIANT ASN-106</scope>
</reference>
<sequence>MAFPAGFGWAAATAAYQVEGGWDADGKGPCVWDTFTHQGGERVFKNQTGDVACGSYTLWEEDLKCIKQLGLTHYRFSLSWSRLLPDGTTGFINQKGIDYYNKIIDDLLKNGVTPIVTLYHFDLPQTLEDQGGWLSEAIIESFDKYAQFCFSTFGDRVKQWITINEANVLSVMSYDLGMFPPGIPHFGTGGYQAAHNLIKAHARSWHSYDSLFRKKQKGMVSLSLFAVWLEPADPNSVSDQEAAKRAITFHLDLFAKPIFIDGDYPEVVKSQIASMSQKQGYPSSRLPEFTEEEKKMIKGTADFFAVQYYTTRLIKYQENKKGELGILQDAEIEFFPDPSWKNVDWIYVVPWGVCKLLKYIKDTYNNPVIYITENGFPQSDPAPLDDTQRWEYFRQTFQELFKAIQLDKVNLQVYCAWSLLDNFEWNQGYSSRFGLFHVDFEDPARPRVPYTSAKEYAKIIRNNGLEAHL</sequence>
<protein>
    <recommendedName>
        <fullName evidence="19">Cytosolic beta-glucosidase</fullName>
        <ecNumber evidence="4 5 12">3.2.1.21</ecNumber>
    </recommendedName>
    <alternativeName>
        <fullName>Cytosolic beta-glucosidase-like protein 1</fullName>
    </alternativeName>
    <alternativeName>
        <fullName evidence="18">Cytosolic galactosylceramidase</fullName>
        <ecNumber evidence="10">3.2.1.46</ecNumber>
    </alternativeName>
    <alternativeName>
        <fullName evidence="18">Cytosolic glucosylceramidase</fullName>
        <ecNumber evidence="10 14">3.2.1.45</ecNumber>
    </alternativeName>
    <alternativeName>
        <fullName evidence="17">Cytosolic glycosylceramidase</fullName>
        <shortName evidence="17">Cytosolic GCase</shortName>
    </alternativeName>
    <alternativeName>
        <fullName evidence="21">Glucosidase beta acid 3</fullName>
    </alternativeName>
    <alternativeName>
        <fullName evidence="21">Glucosylceramidase beta 3</fullName>
    </alternativeName>
    <alternativeName>
        <fullName evidence="17">Klotho-related protein</fullName>
        <shortName evidence="17">KLrP</shortName>
    </alternativeName>
</protein>
<feature type="chain" id="PRO_0000063908" description="Cytosolic beta-glucosidase">
    <location>
        <begin position="1"/>
        <end position="469"/>
    </location>
</feature>
<feature type="active site" description="Proton donor" evidence="2">
    <location>
        <position position="165"/>
    </location>
</feature>
<feature type="active site" description="Nucleophile" evidence="2">
    <location>
        <position position="373"/>
    </location>
</feature>
<feature type="binding site">
    <location>
        <position position="17"/>
    </location>
    <ligand>
        <name>substrate</name>
    </ligand>
</feature>
<feature type="binding site">
    <location>
        <position position="120"/>
    </location>
    <ligand>
        <name>substrate</name>
    </ligand>
</feature>
<feature type="binding site">
    <location>
        <position position="164"/>
    </location>
    <ligand>
        <name>substrate</name>
    </ligand>
</feature>
<feature type="binding site">
    <location>
        <position position="309"/>
    </location>
    <ligand>
        <name>substrate</name>
    </ligand>
</feature>
<feature type="binding site">
    <location>
        <position position="417"/>
    </location>
    <ligand>
        <name>substrate</name>
    </ligand>
</feature>
<feature type="binding site" evidence="1">
    <location>
        <begin position="424"/>
        <end position="425"/>
    </location>
    <ligand>
        <name>substrate</name>
    </ligand>
</feature>
<feature type="splice variant" id="VSP_015835" description="In isoform 2." evidence="16">
    <location>
        <begin position="95"/>
        <end position="401"/>
    </location>
</feature>
<feature type="sequence variant" id="VAR_023587" evidence="8">
    <original>D</original>
    <variation>N</variation>
    <location>
        <position position="106"/>
    </location>
</feature>
<feature type="sequence variant" id="VAR_049298" description="In dbSNP:rs36090352.">
    <original>M</original>
    <variation>I</variation>
    <location>
        <position position="172"/>
    </location>
</feature>
<feature type="sequence variant" id="VAR_023588" description="In dbSNP:rs17612341.">
    <original>R</original>
    <variation>P</variation>
    <location>
        <position position="213"/>
    </location>
</feature>
<feature type="sequence variant" id="VAR_023589" description="In dbSNP:rs16873108.">
    <original>C</original>
    <variation>R</variation>
    <location>
        <position position="354"/>
    </location>
</feature>
<feature type="sequence variant" id="VAR_081439" description="Loss of glucosidase activity toward the artificial substrate 4-methylumbelliferyl-beta-D-glucopyranoside." evidence="9 12">
    <location>
        <begin position="456"/>
        <end position="469"/>
    </location>
</feature>
<feature type="mutagenesis site" description="2-fold decreased glucosylceramidase activity." evidence="10 11">
    <original>E</original>
    <variation>D</variation>
    <location>
        <position position="165"/>
    </location>
</feature>
<feature type="mutagenesis site" description="Loss of glucosylceramidase activity." evidence="10 11">
    <original>E</original>
    <variation>Q</variation>
    <location>
        <position position="165"/>
    </location>
</feature>
<feature type="mutagenesis site" description="No change in temperature or pH dependence. Decreased glucosidase activity." evidence="7">
    <original>V</original>
    <variation>Y</variation>
    <location>
        <position position="168"/>
    </location>
</feature>
<feature type="mutagenesis site" description="Decreased glucosidase activity." evidence="7">
    <original>F</original>
    <variation>S</variation>
    <location>
        <position position="225"/>
    </location>
</feature>
<feature type="mutagenesis site" description="Decreased glucosidase activity." evidence="7">
    <original>Y</original>
    <variation>F</variation>
    <variation>A</variation>
    <location>
        <position position="308"/>
    </location>
</feature>
<feature type="mutagenesis site" description="2-fold decreased glucosylceramidase activity." evidence="10">
    <original>E</original>
    <variation>D</variation>
    <location>
        <position position="373"/>
    </location>
</feature>
<feature type="mutagenesis site" description="Loss of glucosylceramidase activity." evidence="10">
    <original>E</original>
    <variation>Q</variation>
    <location>
        <position position="373"/>
    </location>
</feature>
<feature type="sequence conflict" description="In Ref. 7; AAH70188." evidence="18" ref="7">
    <original>P</original>
    <variation>L</variation>
    <location>
        <position position="29"/>
    </location>
</feature>
<feature type="sequence conflict" description="In Ref. 3; AAG39217." evidence="18" ref="3">
    <original>L</original>
    <variation>W</variation>
    <location>
        <position position="134"/>
    </location>
</feature>
<feature type="sequence conflict" description="In Ref. 5; BAD96683." evidence="18" ref="5">
    <original>Y</original>
    <variation>C</variation>
    <location>
        <position position="309"/>
    </location>
</feature>
<feature type="sequence conflict" description="In Ref. 5; BAD96683." evidence="18" ref="5">
    <original>K</original>
    <variation>R</variation>
    <location>
        <position position="321"/>
    </location>
</feature>
<feature type="sequence conflict" description="In Ref. 2; CAC08178." evidence="18" ref="2">
    <original>I</original>
    <variation>T</variation>
    <location>
        <position position="326"/>
    </location>
</feature>
<feature type="strand" evidence="22">
    <location>
        <begin position="8"/>
        <end position="12"/>
    </location>
</feature>
<feature type="helix" evidence="22">
    <location>
        <begin position="15"/>
        <end position="18"/>
    </location>
</feature>
<feature type="helix" evidence="22">
    <location>
        <begin position="24"/>
        <end position="26"/>
    </location>
</feature>
<feature type="helix" evidence="22">
    <location>
        <begin position="31"/>
        <end position="38"/>
    </location>
</feature>
<feature type="strand" evidence="22">
    <location>
        <begin position="40"/>
        <end position="43"/>
    </location>
</feature>
<feature type="helix" evidence="22">
    <location>
        <begin position="44"/>
        <end position="46"/>
    </location>
</feature>
<feature type="strand" evidence="22">
    <location>
        <begin position="49"/>
        <end position="51"/>
    </location>
</feature>
<feature type="turn" evidence="22">
    <location>
        <begin position="55"/>
        <end position="57"/>
    </location>
</feature>
<feature type="helix" evidence="22">
    <location>
        <begin position="59"/>
        <end position="69"/>
    </location>
</feature>
<feature type="strand" evidence="22">
    <location>
        <begin position="72"/>
        <end position="77"/>
    </location>
</feature>
<feature type="helix" evidence="22">
    <location>
        <begin position="80"/>
        <end position="83"/>
    </location>
</feature>
<feature type="helix" evidence="22">
    <location>
        <begin position="94"/>
        <end position="109"/>
    </location>
</feature>
<feature type="strand" evidence="22">
    <location>
        <begin position="113"/>
        <end position="121"/>
    </location>
</feature>
<feature type="helix" evidence="22">
    <location>
        <begin position="125"/>
        <end position="129"/>
    </location>
</feature>
<feature type="helix" evidence="22">
    <location>
        <begin position="132"/>
        <end position="134"/>
    </location>
</feature>
<feature type="helix" evidence="22">
    <location>
        <begin position="138"/>
        <end position="153"/>
    </location>
</feature>
<feature type="turn" evidence="22">
    <location>
        <begin position="154"/>
        <end position="156"/>
    </location>
</feature>
<feature type="strand" evidence="22">
    <location>
        <begin position="159"/>
        <end position="164"/>
    </location>
</feature>
<feature type="helix" evidence="22">
    <location>
        <begin position="166"/>
        <end position="174"/>
    </location>
</feature>
<feature type="turn" evidence="22">
    <location>
        <begin position="186"/>
        <end position="188"/>
    </location>
</feature>
<feature type="helix" evidence="22">
    <location>
        <begin position="189"/>
        <end position="211"/>
    </location>
</feature>
<feature type="helix" evidence="22">
    <location>
        <begin position="213"/>
        <end position="216"/>
    </location>
</feature>
<feature type="strand" evidence="22">
    <location>
        <begin position="219"/>
        <end position="221"/>
    </location>
</feature>
<feature type="strand" evidence="22">
    <location>
        <begin position="223"/>
        <end position="233"/>
    </location>
</feature>
<feature type="helix" evidence="22">
    <location>
        <begin position="237"/>
        <end position="250"/>
    </location>
</feature>
<feature type="helix" evidence="22">
    <location>
        <begin position="252"/>
        <end position="259"/>
    </location>
</feature>
<feature type="helix" evidence="22">
    <location>
        <begin position="266"/>
        <end position="278"/>
    </location>
</feature>
<feature type="helix" evidence="22">
    <location>
        <begin position="291"/>
        <end position="297"/>
    </location>
</feature>
<feature type="strand" evidence="22">
    <location>
        <begin position="302"/>
        <end position="316"/>
    </location>
</feature>
<feature type="helix" evidence="22">
    <location>
        <begin position="326"/>
        <end position="330"/>
    </location>
</feature>
<feature type="strand" evidence="22">
    <location>
        <begin position="332"/>
        <end position="335"/>
    </location>
</feature>
<feature type="helix" evidence="22">
    <location>
        <begin position="351"/>
        <end position="363"/>
    </location>
</feature>
<feature type="strand" evidence="22">
    <location>
        <begin position="369"/>
        <end position="374"/>
    </location>
</feature>
<feature type="strand" evidence="22">
    <location>
        <begin position="378"/>
        <end position="381"/>
    </location>
</feature>
<feature type="helix" evidence="22">
    <location>
        <begin position="387"/>
        <end position="405"/>
    </location>
</feature>
<feature type="strand" evidence="22">
    <location>
        <begin position="411"/>
        <end position="417"/>
    </location>
</feature>
<feature type="helix" evidence="22">
    <location>
        <begin position="425"/>
        <end position="430"/>
    </location>
</feature>
<feature type="strand" evidence="22">
    <location>
        <begin position="435"/>
        <end position="438"/>
    </location>
</feature>
<feature type="strand" evidence="23">
    <location>
        <begin position="442"/>
        <end position="444"/>
    </location>
</feature>
<feature type="strand" evidence="22">
    <location>
        <begin position="447"/>
        <end position="449"/>
    </location>
</feature>
<feature type="helix" evidence="22">
    <location>
        <begin position="451"/>
        <end position="462"/>
    </location>
</feature>
<comment type="function">
    <text evidence="4 5 10 12 13 14 15">Neutral cytosolic beta-glycosidase with a broad substrate specificity that could play a role in the catabolism of glycosylceramides (PubMed:11389701, PubMed:11784319, PubMed:17595169, PubMed:20728381, PubMed:26724485, PubMed:33361282). Has a significant glucosylceramidase activity in vitro (PubMed:17595169, PubMed:26724485). However, that activity is relatively low and its significance in vivo is not clear (PubMed:17595169, PubMed:20728381, PubMed:26724485). Hydrolyzes galactosylceramides/GalCers, glucosylsphingosines/GlcSphs and galactosylsphingosines/GalSphs (PubMed:17595169). However, the in vivo relevance of these activities is unclear (PubMed:17595169). It can also hydrolyze a broad variety of dietary glycosides including phytoestrogens, flavonols, flavones, flavanones and cyanogens in vitro and could therefore play a role in the metabolism of xenobiotics (PubMed:11784319). Possesses transxylosylase activity in vitro using xylosylated ceramides/XylCers (such as beta-D-xylosyl-(1&lt;-&gt;1')-N-acylsphing-4-enine) as xylosyl donors and cholesterol as acceptor (PubMed:33361282). Could also play a role in the catabolism of cytosolic sialyl free N-glycans (PubMed:26193330).</text>
</comment>
<comment type="catalytic activity">
    <reaction evidence="4 5 12">
        <text>Hydrolysis of terminal, non-reducing beta-D-glucosyl residues with release of beta-D-glucose.</text>
        <dbReference type="EC" id="3.2.1.21"/>
    </reaction>
</comment>
<comment type="catalytic activity">
    <reaction evidence="10 14">
        <text>a beta-D-glucosyl-(1&lt;-&gt;1')-N-acylsphing-4-enine + H2O = an N-acylsphing-4-enine + D-glucose</text>
        <dbReference type="Rhea" id="RHEA:13269"/>
        <dbReference type="ChEBI" id="CHEBI:4167"/>
        <dbReference type="ChEBI" id="CHEBI:15377"/>
        <dbReference type="ChEBI" id="CHEBI:22801"/>
        <dbReference type="ChEBI" id="CHEBI:52639"/>
        <dbReference type="EC" id="3.2.1.45"/>
    </reaction>
    <physiologicalReaction direction="left-to-right" evidence="10">
        <dbReference type="Rhea" id="RHEA:13270"/>
    </physiologicalReaction>
</comment>
<comment type="catalytic activity">
    <reaction evidence="10">
        <text>a beta-D-galactosyl-(1&lt;-&gt;1')-N-acylsphing-4-enine + H2O = an N-acylsphing-4-enine + D-galactose</text>
        <dbReference type="Rhea" id="RHEA:14297"/>
        <dbReference type="ChEBI" id="CHEBI:4139"/>
        <dbReference type="ChEBI" id="CHEBI:15377"/>
        <dbReference type="ChEBI" id="CHEBI:18390"/>
        <dbReference type="ChEBI" id="CHEBI:52639"/>
        <dbReference type="EC" id="3.2.1.46"/>
    </reaction>
    <physiologicalReaction direction="left-to-right" evidence="10">
        <dbReference type="Rhea" id="RHEA:14298"/>
    </physiologicalReaction>
</comment>
<comment type="catalytic activity">
    <reaction evidence="10">
        <text>beta-D-glucosyl-(1&lt;-&gt;1)-sphing-4-enine + H2O = sphing-4-enine + D-glucose</text>
        <dbReference type="Rhea" id="RHEA:59288"/>
        <dbReference type="ChEBI" id="CHEBI:4167"/>
        <dbReference type="ChEBI" id="CHEBI:15377"/>
        <dbReference type="ChEBI" id="CHEBI:57756"/>
        <dbReference type="ChEBI" id="CHEBI:83992"/>
    </reaction>
    <physiologicalReaction direction="left-to-right" evidence="10">
        <dbReference type="Rhea" id="RHEA:59289"/>
    </physiologicalReaction>
</comment>
<comment type="catalytic activity">
    <reaction evidence="10">
        <text>beta-D-glucosyl-(1&lt;-&gt;1)-N-octadecanoylsphing-4-enine + H2O = N-octadecanoylsphing-4-enine + D-glucose</text>
        <dbReference type="Rhea" id="RHEA:59284"/>
        <dbReference type="ChEBI" id="CHEBI:4167"/>
        <dbReference type="ChEBI" id="CHEBI:15377"/>
        <dbReference type="ChEBI" id="CHEBI:72961"/>
        <dbReference type="ChEBI" id="CHEBI:84719"/>
    </reaction>
    <physiologicalReaction direction="left-to-right" evidence="10">
        <dbReference type="Rhea" id="RHEA:59285"/>
    </physiologicalReaction>
</comment>
<comment type="catalytic activity">
    <reaction evidence="10">
        <text>beta-D-galactosyl-(1&lt;-&gt;1)-sphing-4-enine + H2O = sphing-4-enine + D-galactose</text>
        <dbReference type="Rhea" id="RHEA:43908"/>
        <dbReference type="ChEBI" id="CHEBI:4139"/>
        <dbReference type="ChEBI" id="CHEBI:15377"/>
        <dbReference type="ChEBI" id="CHEBI:57756"/>
        <dbReference type="ChEBI" id="CHEBI:57934"/>
    </reaction>
    <physiologicalReaction direction="left-to-right" evidence="10">
        <dbReference type="Rhea" id="RHEA:43909"/>
    </physiologicalReaction>
</comment>
<comment type="catalytic activity">
    <reaction evidence="10">
        <text>beta-D-galactosyl-(1&lt;-&gt;1')-N-octadecanoylsphing-4-enine + H2O = N-octadecanoylsphing-4-enine + D-galactose</text>
        <dbReference type="Rhea" id="RHEA:59292"/>
        <dbReference type="ChEBI" id="CHEBI:4139"/>
        <dbReference type="ChEBI" id="CHEBI:15377"/>
        <dbReference type="ChEBI" id="CHEBI:72961"/>
        <dbReference type="ChEBI" id="CHEBI:84720"/>
    </reaction>
    <physiologicalReaction direction="left-to-right" evidence="10">
        <dbReference type="Rhea" id="RHEA:59293"/>
    </physiologicalReaction>
</comment>
<comment type="catalytic activity">
    <reaction evidence="20">
        <text>a beta-D-xylosyl-(1&lt;-&gt;1')-N-acylsphing-4-enine + cholesterol = cholesteryl 3-beta-D-xyloside + an N-acylsphing-4-enine</text>
        <dbReference type="Rhea" id="RHEA:70239"/>
        <dbReference type="ChEBI" id="CHEBI:16113"/>
        <dbReference type="ChEBI" id="CHEBI:52639"/>
        <dbReference type="ChEBI" id="CHEBI:189067"/>
        <dbReference type="ChEBI" id="CHEBI:189068"/>
    </reaction>
    <physiologicalReaction direction="left-to-right" evidence="20">
        <dbReference type="Rhea" id="RHEA:70240"/>
    </physiologicalReaction>
    <physiologicalReaction direction="right-to-left" evidence="18">
        <dbReference type="Rhea" id="RHEA:70241"/>
    </physiologicalReaction>
</comment>
<comment type="activity regulation">
    <text evidence="4 5 10 12">Inhibited by 2,4-dinitrophenyl-2-fluoro-2-deoxy-beta-D-glucopyranoside (PubMed:11784319). Inhibited by sodium taurocholate (PubMed:11389701). Inhibited by alpha-1-C-nonyl-DIX/AnDIX (PubMed:20728381). The glucosylceramidase activity is slightly inhibited by conduritol B epoxide/CBE while the galactosylceramidase activity is not (PubMed:17595169).</text>
</comment>
<comment type="biophysicochemical properties">
    <kinetics>
        <KM evidence="10">13.67 uM for glucosylceramide (at 37 degrees Celsius and pH 6.0)</KM>
        <KM evidence="10">9.24 uM for galactosylceramide (at 37 degrees Celsius and pH 6.0)</KM>
        <KM evidence="10">4.64 uM for C6-NBD-glucosylceramide (at 37 degrees Celsius and pH 6.0)</KM>
        <KM evidence="10">2.04 uM for C6-NBD-galactosylceramide (at 37 degrees Celsius and pH 6.0)</KM>
        <KM evidence="4">40 uM for 4-methylumbelliferyl-beta-D-glucopyranoside (at 37 degrees Celsius and pH 5.5)</KM>
        <KM evidence="10">49.28 uM for 4-methylumbelliferyl-beta-D-glucopyranoside (at 37 degrees Celsius and pH 6.0)</KM>
        <KM evidence="4">50 uM for 4-methylumbelliferyl-beta-D-galactopyranoside (at 37 degrees Celsius and pH 5.5)</KM>
        <KM evidence="10">144.49 uM for 4-methylumbelliferyl-beta-D-galactopyranoside (at 37 degrees Celsius and pH 6.0)</KM>
        <KM evidence="5">370 uM for 4-nitrophenyl-beta-D-fucopyranoside</KM>
        <KM evidence="5">570 uM for 4-nitrophenyl-alpha-L-arabinopyranoside</KM>
        <KM evidence="5">1.76 mM for 4-nitrophenyl-beta-D-glucopyranoside</KM>
        <KM evidence="5">3.14 mM for 4-nitrophenyl-beta-D-galactopyranoside</KM>
        <KM evidence="5">1.58 mM for 4-nitrophenyl-beta-D-xylopyranoside</KM>
        <KM evidence="5">52.6 mM for 4-nitrophenyl-beta-L-arabinopyranoside</KM>
        <KM evidence="5">35 uM for genistein-7-glucoside</KM>
        <KM evidence="5">118 uM for daidzein-7-glucoside</KM>
        <KM evidence="5">31.8 uM for quercetin-4'-glucoside</KM>
        <KM evidence="5">42.2 uM for quercetin-7-glucoside</KM>
        <KM evidence="5">21.5 uM for apigenin-7-glucoside</KM>
        <KM evidence="5">10 uM for luteolin-4'-glucoside</KM>
        <KM evidence="5">50 uM for luteolin-7-glucoside</KM>
        <KM evidence="5">432 uM for naringenin-7-glucoside</KM>
        <KM evidence="5">253 uM for eriodictyol-7-glucoside</KM>
        <Vmax evidence="12">280.0 umol/h/mg enzyme toward 4-methylumbelliferyl-beta-D-glucopyranoside</Vmax>
        <Vmax evidence="5">10.0 umol/min/mg enzyme toward 4-nitrophenyl-beta-D-glucopyranoside</Vmax>
        <Vmax evidence="5">1.73 umol/min/mg enzyme toward genistein-7-glucoside</Vmax>
        <Vmax evidence="5">2.75 umol/min/mg enzyme toward daidzein-7-glucoside</Vmax>
        <Vmax evidence="5">1.19 umol/min/mg enzyme toward quercetin-4'-glucoside</Vmax>
        <Vmax evidence="5">0.77 umol/min/mg enzyme toward quercetin-7-glucoside</Vmax>
        <Vmax evidence="5">1.3 umol/min/mg enzyme toward apigenin-7-glucoside</Vmax>
        <Vmax evidence="5">1.3 umol/min/mg enzyme toward luteolin-4'-glucoside</Vmax>
        <Vmax evidence="5">2.85 umol/min/mg enzyme toward luteolin-7-glucoside</Vmax>
        <Vmax evidence="5">0.93 umol/min/mg enzyme toward naringenin-7-glucoside</Vmax>
        <Vmax evidence="5">0.9 umol/min/mg enzyme toward eriodictyol-7-glucoside</Vmax>
        <text evidence="5 10">kcat is 0.43 min(-1) for the hydrolysis of glucosylceramide (PubMed:17595169). kcat&lt;0.01 min(-1) for the hydrolysis of galactosylceramide (PubMed:17595169). kcat is 7.26 min(-1) for the hydrolysis of C6-NBD-glucosylceramide (PubMed:17595169). kcat is 1.53 min(-1) for the hydrolysis of C6-NBD-galactosylceramide (PubMed:17595169). kcat is 73.75 min(-1) for the hydrolysis of 4-methylumbelliferyl-beta-D-glucopyranoside (PubMed:17595169). kcat is 94.35 min(-1) for the hydrolysis of 4-methylumbelliferyl-beta-D-galactopyranoside (PubMed:17595169). kcat is 10.7 sec(-1) for the hydrolysis of 4-nitrophenyl-beta-D-fucopyranoside (PubMed:11784319). kcat is 5.97 sec(-1) for the hydrolysis of 4-nitrophenyl-alpha-L-arabinopyranoside (PubMed:11784319). kcat is 12.1 sec(-1) for the hydrolysis of 4-nitrophenyl-beta-D-glucopyranoside (PubMed:11784319). kcat is 17.6 sec(-1) for the hydrolysis of 4-nitrophenyl-beta-D-galactopyranoside (PubMed:11784319). kcat is 0.75 sec(-1) for the hydrolysis of 4-nitrophenyl-beta-D-xylopyranoside (PubMed:11784319). kcat is 0.66 sec(-1) for the hydrolysis of 4-nitrophenyl-beta-L-arabinopyranoside (PubMed:11784319).</text>
    </kinetics>
    <phDependence>
        <text evidence="5 10 12">Optimum pH is 6.0-7.0 for the glucosylceramidase activity (PubMed:11784319, PubMed:17595169). Optimum pH is 6.0 for the hydrolysis of 4-methylumbelliferyl-beta-D-glucopyranoside (PubMed:20728381). Activity decreases sharply with increasing acidity and is less than 4% at pH 4 (PubMed:11784319).</text>
    </phDependence>
    <temperatureDependence>
        <text evidence="5">Optimum temperature is 50 degrees Celsius (PubMed:11784319). Stable more than 24 hours at 37 degrees Celsius (PubMed:11784319). Loses activity at 58 degrees Celsius (PubMed:11784319).</text>
    </temperatureDependence>
</comment>
<comment type="subunit">
    <text evidence="13">May interact with NEU2.</text>
</comment>
<comment type="subcellular location">
    <subcellularLocation>
        <location evidence="6 10">Cytoplasm</location>
        <location evidence="6 10">Cytosol</location>
    </subcellularLocation>
</comment>
<comment type="alternative products">
    <event type="alternative splicing"/>
    <isoform>
        <id>Q9H227-1</id>
        <name>1</name>
        <sequence type="displayed"/>
    </isoform>
    <isoform>
        <id>Q9H227-2</id>
        <name>2</name>
        <sequence type="described" ref="VSP_015835"/>
    </isoform>
</comment>
<comment type="tissue specificity">
    <text evidence="3 6">Present in small intestine (at protein level). Expressed in liver, small intestine, colon, spleen and kidney. Down-regulated in renal cell carcinomas and hepatocellular carcinomas.</text>
</comment>
<comment type="PTM">
    <text evidence="5">The N-terminus is blocked.</text>
</comment>
<comment type="polymorphism">
    <text evidence="12">The sequence shown in this entry differs from the translation of the reference genome assembly (GRCh38/hg38) due to a nonsense variant creating stop codon at position 456 in the reference genome, leading to the synthesis of a truncated protein lacking enzymatic activity in vitro. The sequence shown in this entry is that of variant p.Ter456Tyr, which has a frequency of about 88% in the human population according to the Genome Aggregation Database (gnomAD v3.1.2) and gives rise to a fully active beta-glucosidase.</text>
</comment>
<comment type="similarity">
    <text evidence="18">Belongs to the glycosyl hydrolase 1 family. Klotho subfamily.</text>
</comment>
<comment type="caution">
    <text evidence="18">The sequence shown in this entry differs from the translation of the reference genome assembly (GRCh38/hg38) due to a nonsense variant creating stop codon at position 456 in the reference genome.</text>
</comment>
<dbReference type="EC" id="3.2.1.21" evidence="4 5 12"/>
<dbReference type="EC" id="3.2.1.46" evidence="10"/>
<dbReference type="EC" id="3.2.1.45" evidence="10 14"/>
<dbReference type="EMBL" id="AB017913">
    <property type="protein sequence ID" value="BAB18741.1"/>
    <property type="molecule type" value="mRNA"/>
</dbReference>
<dbReference type="EMBL" id="AJ278964">
    <property type="protein sequence ID" value="CAC08178.1"/>
    <property type="molecule type" value="mRNA"/>
</dbReference>
<dbReference type="EMBL" id="AF317840">
    <property type="protein sequence ID" value="AAG39217.1"/>
    <property type="molecule type" value="mRNA"/>
</dbReference>
<dbReference type="EMBL" id="AF323990">
    <property type="protein sequence ID" value="AAL37305.1"/>
    <property type="molecule type" value="mRNA"/>
</dbReference>
<dbReference type="EMBL" id="AK222963">
    <property type="protein sequence ID" value="BAD96683.1"/>
    <property type="molecule type" value="mRNA"/>
</dbReference>
<dbReference type="EMBL" id="AC093917">
    <property type="status" value="NOT_ANNOTATED_CDS"/>
    <property type="molecule type" value="Genomic_DNA"/>
</dbReference>
<dbReference type="EMBL" id="BC029362">
    <property type="protein sequence ID" value="AAH29362.1"/>
    <property type="molecule type" value="mRNA"/>
</dbReference>
<dbReference type="EMBL" id="BC070188">
    <property type="protein sequence ID" value="AAH70188.1"/>
    <property type="molecule type" value="mRNA"/>
</dbReference>
<dbReference type="EMBL" id="BC101829">
    <property type="protein sequence ID" value="AAI01830.1"/>
    <property type="molecule type" value="mRNA"/>
</dbReference>
<dbReference type="EMBL" id="BC109377">
    <property type="protein sequence ID" value="AAI09378.1"/>
    <property type="molecule type" value="mRNA"/>
</dbReference>
<dbReference type="RefSeq" id="NP_001121904.1">
    <molecule id="Q9H227-2"/>
    <property type="nucleotide sequence ID" value="NM_001128432.3"/>
</dbReference>
<dbReference type="RefSeq" id="NP_001264154.1">
    <property type="nucleotide sequence ID" value="NM_001277225.1"/>
</dbReference>
<dbReference type="RefSeq" id="NP_066024.1">
    <molecule id="Q9H227-1"/>
    <property type="nucleotide sequence ID" value="NM_020973.5"/>
</dbReference>
<dbReference type="PDB" id="2E9L">
    <property type="method" value="X-ray"/>
    <property type="resolution" value="1.60 A"/>
    <property type="chains" value="A=1-469"/>
</dbReference>
<dbReference type="PDB" id="2E9M">
    <property type="method" value="X-ray"/>
    <property type="resolution" value="1.80 A"/>
    <property type="chains" value="A=1-469"/>
</dbReference>
<dbReference type="PDB" id="2JFE">
    <property type="method" value="X-ray"/>
    <property type="resolution" value="2.70 A"/>
    <property type="chains" value="X=1-469"/>
</dbReference>
<dbReference type="PDB" id="2ZOX">
    <property type="method" value="X-ray"/>
    <property type="resolution" value="1.90 A"/>
    <property type="chains" value="A=1-469"/>
</dbReference>
<dbReference type="PDB" id="3VKK">
    <property type="method" value="X-ray"/>
    <property type="resolution" value="2.00 A"/>
    <property type="chains" value="A=1-469"/>
</dbReference>
<dbReference type="PDBsum" id="2E9L"/>
<dbReference type="PDBsum" id="2E9M"/>
<dbReference type="PDBsum" id="2JFE"/>
<dbReference type="PDBsum" id="2ZOX"/>
<dbReference type="PDBsum" id="3VKK"/>
<dbReference type="SMR" id="Q9H227"/>
<dbReference type="BioGRID" id="121753">
    <property type="interactions" value="10"/>
</dbReference>
<dbReference type="FunCoup" id="Q9H227">
    <property type="interactions" value="38"/>
</dbReference>
<dbReference type="IntAct" id="Q9H227">
    <property type="interactions" value="7"/>
</dbReference>
<dbReference type="BindingDB" id="Q9H227"/>
<dbReference type="ChEMBL" id="CHEMBL3865"/>
<dbReference type="SwissLipids" id="SLP:000001931"/>
<dbReference type="CAZy" id="GH1">
    <property type="family name" value="Glycoside Hydrolase Family 1"/>
</dbReference>
<dbReference type="GlyGen" id="Q9H227">
    <property type="glycosylation" value="3 sites, 1 O-linked glycan (1 site)"/>
</dbReference>
<dbReference type="iPTMnet" id="Q9H227"/>
<dbReference type="PhosphoSitePlus" id="Q9H227"/>
<dbReference type="BioMuta" id="GBA3"/>
<dbReference type="DMDM" id="77416427"/>
<dbReference type="jPOST" id="Q9H227"/>
<dbReference type="MassIVE" id="Q9H227"/>
<dbReference type="PeptideAtlas" id="Q9H227"/>
<dbReference type="ProteomicsDB" id="80477">
    <molecule id="Q9H227-1"/>
</dbReference>
<dbReference type="ProteomicsDB" id="80478">
    <molecule id="Q9H227-2"/>
</dbReference>
<dbReference type="DNASU" id="57733"/>
<dbReference type="Ensembl" id="ENST00000709220.2">
    <molecule id="Q9H227-1"/>
    <property type="protein sequence ID" value="ENSP00000517562.1"/>
    <property type="gene ID" value="ENSG00000291927.2"/>
</dbReference>
<dbReference type="Ensembl" id="ENST00000709221.1">
    <molecule id="Q9H227-2"/>
    <property type="protein sequence ID" value="ENSP00000517563.1"/>
    <property type="gene ID" value="ENSG00000291927.2"/>
</dbReference>
<dbReference type="GeneID" id="57733"/>
<dbReference type="KEGG" id="hsa:57733"/>
<dbReference type="MANE-Select" id="ENST00000709220.2">
    <property type="protein sequence ID" value="ENSP00000517562.1"/>
    <property type="RefSeq nucleotide sequence ID" value="NM_020973.5"/>
    <property type="RefSeq protein sequence ID" value="NP_066024.1"/>
</dbReference>
<dbReference type="AGR" id="HGNC:19069"/>
<dbReference type="CTD" id="57733"/>
<dbReference type="DisGeNET" id="57733"/>
<dbReference type="GeneCards" id="GBA3"/>
<dbReference type="HGNC" id="HGNC:19069">
    <property type="gene designation" value="GBA3"/>
</dbReference>
<dbReference type="MIM" id="606619">
    <property type="type" value="gene"/>
</dbReference>
<dbReference type="neXtProt" id="NX_Q9H227"/>
<dbReference type="PharmGKB" id="PA134861643"/>
<dbReference type="InParanoid" id="Q9H227"/>
<dbReference type="OrthoDB" id="65569at2759"/>
<dbReference type="PAN-GO" id="Q9H227">
    <property type="GO annotations" value="5 GO annotations based on evolutionary models"/>
</dbReference>
<dbReference type="PhylomeDB" id="Q9H227"/>
<dbReference type="BioCyc" id="MetaCyc:HS11014-MONOMER"/>
<dbReference type="BRENDA" id="3.2.1.21">
    <property type="organism ID" value="2681"/>
</dbReference>
<dbReference type="PathwayCommons" id="Q9H227"/>
<dbReference type="Reactome" id="R-HSA-9840310">
    <property type="pathway name" value="Glycosphingolipid catabolism"/>
</dbReference>
<dbReference type="SABIO-RK" id="Q9H227"/>
<dbReference type="SignaLink" id="Q9H227"/>
<dbReference type="BioGRID-ORCS" id="57733">
    <property type="hits" value="2 hits in 160 CRISPR screens"/>
</dbReference>
<dbReference type="ChiTaRS" id="GBA3">
    <property type="organism name" value="human"/>
</dbReference>
<dbReference type="EvolutionaryTrace" id="Q9H227"/>
<dbReference type="GeneWiki" id="GBA3"/>
<dbReference type="GenomeRNAi" id="57733"/>
<dbReference type="Pharos" id="Q9H227">
    <property type="development level" value="Tbio"/>
</dbReference>
<dbReference type="PRO" id="PR:Q9H227"/>
<dbReference type="Proteomes" id="UP000005640">
    <property type="component" value="Unplaced"/>
</dbReference>
<dbReference type="RNAct" id="Q9H227">
    <property type="molecule type" value="protein"/>
</dbReference>
<dbReference type="GO" id="GO:1902494">
    <property type="term" value="C:catalytic complex"/>
    <property type="evidence" value="ECO:0000314"/>
    <property type="project" value="CAFA"/>
</dbReference>
<dbReference type="GO" id="GO:0005829">
    <property type="term" value="C:cytosol"/>
    <property type="evidence" value="ECO:0000314"/>
    <property type="project" value="UniProtKB"/>
</dbReference>
<dbReference type="GO" id="GO:0016020">
    <property type="term" value="C:membrane"/>
    <property type="evidence" value="ECO:0007669"/>
    <property type="project" value="GOC"/>
</dbReference>
<dbReference type="GO" id="GO:0004565">
    <property type="term" value="F:beta-galactosidase activity"/>
    <property type="evidence" value="ECO:0000314"/>
    <property type="project" value="UniProtKB"/>
</dbReference>
<dbReference type="GO" id="GO:0008422">
    <property type="term" value="F:beta-glucosidase activity"/>
    <property type="evidence" value="ECO:0000314"/>
    <property type="project" value="UniProtKB"/>
</dbReference>
<dbReference type="GO" id="GO:0004336">
    <property type="term" value="F:galactosylceramidase activity"/>
    <property type="evidence" value="ECO:0000314"/>
    <property type="project" value="UniProtKB"/>
</dbReference>
<dbReference type="GO" id="GO:0004348">
    <property type="term" value="F:glucosylceramidase activity"/>
    <property type="evidence" value="ECO:0000314"/>
    <property type="project" value="UniProtKB"/>
</dbReference>
<dbReference type="GO" id="GO:0017042">
    <property type="term" value="F:glycosylceramidase activity"/>
    <property type="evidence" value="ECO:0000314"/>
    <property type="project" value="UniProtKB"/>
</dbReference>
<dbReference type="GO" id="GO:1901805">
    <property type="term" value="P:beta-glucoside catabolic process"/>
    <property type="evidence" value="ECO:0000314"/>
    <property type="project" value="UniProtKB"/>
</dbReference>
<dbReference type="GO" id="GO:0006683">
    <property type="term" value="P:galactosylceramide catabolic process"/>
    <property type="evidence" value="ECO:0000314"/>
    <property type="project" value="UniProtKB"/>
</dbReference>
<dbReference type="GO" id="GO:0006680">
    <property type="term" value="P:glucosylceramide catabolic process"/>
    <property type="evidence" value="ECO:0000314"/>
    <property type="project" value="UniProtKB"/>
</dbReference>
<dbReference type="GO" id="GO:0016139">
    <property type="term" value="P:glycoside catabolic process"/>
    <property type="evidence" value="ECO:0000314"/>
    <property type="project" value="UniProtKB"/>
</dbReference>
<dbReference type="GO" id="GO:0046479">
    <property type="term" value="P:glycosphingolipid catabolic process"/>
    <property type="evidence" value="ECO:0000304"/>
    <property type="project" value="Reactome"/>
</dbReference>
<dbReference type="GO" id="GO:0046477">
    <property type="term" value="P:glycosylceramide catabolic process"/>
    <property type="evidence" value="ECO:0000318"/>
    <property type="project" value="GO_Central"/>
</dbReference>
<dbReference type="GO" id="GO:0009313">
    <property type="term" value="P:oligosaccharide catabolic process"/>
    <property type="evidence" value="ECO:0000314"/>
    <property type="project" value="CAFA"/>
</dbReference>
<dbReference type="GO" id="GO:1903017">
    <property type="term" value="P:positive regulation of exo-alpha-sialidase activity"/>
    <property type="evidence" value="ECO:0000314"/>
    <property type="project" value="CAFA"/>
</dbReference>
<dbReference type="GO" id="GO:0050821">
    <property type="term" value="P:protein stabilization"/>
    <property type="evidence" value="ECO:0000314"/>
    <property type="project" value="CAFA"/>
</dbReference>
<dbReference type="FunFam" id="3.20.20.80:FF:000011">
    <property type="entry name" value="Cytosolic beta-glucosidase"/>
    <property type="match status" value="1"/>
</dbReference>
<dbReference type="Gene3D" id="3.20.20.80">
    <property type="entry name" value="Glycosidases"/>
    <property type="match status" value="1"/>
</dbReference>
<dbReference type="InterPro" id="IPR001360">
    <property type="entry name" value="Glyco_hydro_1"/>
</dbReference>
<dbReference type="InterPro" id="IPR033132">
    <property type="entry name" value="Glyco_hydro_1_N_CS"/>
</dbReference>
<dbReference type="InterPro" id="IPR017853">
    <property type="entry name" value="Glycoside_hydrolase_SF"/>
</dbReference>
<dbReference type="PANTHER" id="PTHR10353:SF291">
    <property type="entry name" value="CYTOSOLIC BETA-GLUCOSIDASE"/>
    <property type="match status" value="1"/>
</dbReference>
<dbReference type="PANTHER" id="PTHR10353">
    <property type="entry name" value="GLYCOSYL HYDROLASE"/>
    <property type="match status" value="1"/>
</dbReference>
<dbReference type="Pfam" id="PF00232">
    <property type="entry name" value="Glyco_hydro_1"/>
    <property type="match status" value="1"/>
</dbReference>
<dbReference type="PRINTS" id="PR00131">
    <property type="entry name" value="GLHYDRLASE1"/>
</dbReference>
<dbReference type="SUPFAM" id="SSF51445">
    <property type="entry name" value="(Trans)glycosidases"/>
    <property type="match status" value="1"/>
</dbReference>
<dbReference type="PROSITE" id="PS00653">
    <property type="entry name" value="GLYCOSYL_HYDROL_F1_2"/>
    <property type="match status" value="1"/>
</dbReference>
<gene>
    <name evidence="21" type="primary">GBA3</name>
    <name type="synonym">CBG</name>
    <name type="synonym">CBGL1</name>
</gene>
<accession>Q9H227</accession>
<accession>Q32LY7</accession>
<accession>Q3MIH4</accession>
<accession>Q53GG8</accession>
<accession>Q6NSF4</accession>
<accession>Q8NHT8</accession>
<accession>Q9H3T4</accession>
<accession>Q9H4C6</accession>
<name>GBA3_HUMAN</name>
<keyword id="KW-0002">3D-structure</keyword>
<keyword id="KW-0025">Alternative splicing</keyword>
<keyword id="KW-0963">Cytoplasm</keyword>
<keyword id="KW-0326">Glycosidase</keyword>
<keyword id="KW-0378">Hydrolase</keyword>
<keyword id="KW-0443">Lipid metabolism</keyword>
<keyword id="KW-1267">Proteomics identification</keyword>
<keyword id="KW-1185">Reference proteome</keyword>
<evidence type="ECO:0000250" key="1"/>
<evidence type="ECO:0000255" key="2"/>
<evidence type="ECO:0000269" key="3">
    <source>
    </source>
</evidence>
<evidence type="ECO:0000269" key="4">
    <source>
    </source>
</evidence>
<evidence type="ECO:0000269" key="5">
    <source>
    </source>
</evidence>
<evidence type="ECO:0000269" key="6">
    <source>
    </source>
</evidence>
<evidence type="ECO:0000269" key="7">
    <source>
    </source>
</evidence>
<evidence type="ECO:0000269" key="8">
    <source>
    </source>
</evidence>
<evidence type="ECO:0000269" key="9">
    <source>
    </source>
</evidence>
<evidence type="ECO:0000269" key="10">
    <source>
    </source>
</evidence>
<evidence type="ECO:0000269" key="11">
    <source>
    </source>
</evidence>
<evidence type="ECO:0000269" key="12">
    <source>
    </source>
</evidence>
<evidence type="ECO:0000269" key="13">
    <source>
    </source>
</evidence>
<evidence type="ECO:0000269" key="14">
    <source>
    </source>
</evidence>
<evidence type="ECO:0000269" key="15">
    <source>
    </source>
</evidence>
<evidence type="ECO:0000303" key="16">
    <source>
    </source>
</evidence>
<evidence type="ECO:0000303" key="17">
    <source>
    </source>
</evidence>
<evidence type="ECO:0000305" key="18"/>
<evidence type="ECO:0000305" key="19">
    <source>
    </source>
</evidence>
<evidence type="ECO:0000305" key="20">
    <source>
    </source>
</evidence>
<evidence type="ECO:0000312" key="21">
    <source>
        <dbReference type="HGNC" id="HGNC:19069"/>
    </source>
</evidence>
<evidence type="ECO:0007829" key="22">
    <source>
        <dbReference type="PDB" id="2E9L"/>
    </source>
</evidence>
<evidence type="ECO:0007829" key="23">
    <source>
        <dbReference type="PDB" id="2JFE"/>
    </source>
</evidence>